<organism>
    <name type="scientific">Staphylococcus epidermidis (strain ATCC 12228 / FDA PCI 1200)</name>
    <dbReference type="NCBI Taxonomy" id="176280"/>
    <lineage>
        <taxon>Bacteria</taxon>
        <taxon>Bacillati</taxon>
        <taxon>Bacillota</taxon>
        <taxon>Bacilli</taxon>
        <taxon>Bacillales</taxon>
        <taxon>Staphylococcaceae</taxon>
        <taxon>Staphylococcus</taxon>
    </lineage>
</organism>
<keyword id="KW-0002">3D-structure</keyword>
<keyword id="KW-0963">Cytoplasm</keyword>
<keyword id="KW-0255">Endonuclease</keyword>
<keyword id="KW-0269">Exonuclease</keyword>
<keyword id="KW-0378">Hydrolase</keyword>
<keyword id="KW-0479">Metal-binding</keyword>
<keyword id="KW-0540">Nuclease</keyword>
<keyword id="KW-0694">RNA-binding</keyword>
<keyword id="KW-0698">rRNA processing</keyword>
<keyword id="KW-0862">Zinc</keyword>
<gene>
    <name evidence="2" type="primary">rnj2</name>
    <name type="ordered locus">SE_0952</name>
</gene>
<accession>Q8CST0</accession>
<name>RNJ2_STAES</name>
<protein>
    <recommendedName>
        <fullName evidence="2">Ribonuclease J 2</fullName>
        <shortName evidence="2">RNase J2</shortName>
        <ecNumber evidence="2">3.1.-.-</ecNumber>
    </recommendedName>
</protein>
<evidence type="ECO:0000250" key="1"/>
<evidence type="ECO:0000255" key="2">
    <source>
        <dbReference type="HAMAP-Rule" id="MF_01491"/>
    </source>
</evidence>
<evidence type="ECO:0000305" key="3"/>
<evidence type="ECO:0007829" key="4">
    <source>
        <dbReference type="PDB" id="6K6W"/>
    </source>
</evidence>
<comment type="function">
    <text evidence="1">An RNase that has 5'-3' exonuclease and possibly endoonuclease activity. Involved in maturation of rRNA and in some organisms also mRNA maturation and/or decay (By similarity).</text>
</comment>
<comment type="cofactor">
    <cofactor evidence="2">
        <name>Zn(2+)</name>
        <dbReference type="ChEBI" id="CHEBI:29105"/>
    </cofactor>
    <text evidence="2">Binds up to 2 Zn(2+) ions per subunit. It is not clear if Zn(2+) or Mg(2+) is physiologically important.</text>
</comment>
<comment type="subunit">
    <text evidence="2">Homodimer, may be a subunit of the RNA degradosome.</text>
</comment>
<comment type="subcellular location">
    <subcellularLocation>
        <location evidence="2">Cytoplasm</location>
    </subcellularLocation>
</comment>
<comment type="similarity">
    <text evidence="2">Belongs to the metallo-beta-lactamase superfamily. RNA-metabolizing metallo-beta-lactamase-like family. Bacterial RNase J subfamily.</text>
</comment>
<comment type="sequence caution" evidence="3">
    <conflict type="erroneous initiation">
        <sequence resource="EMBL-CDS" id="AAO04549"/>
    </conflict>
    <text>Extended N-terminus.</text>
</comment>
<proteinExistence type="evidence at protein level"/>
<sequence>MSLIKKKNKDIRIIPLGGVGEIAKNMYIVEVDDEMFMLDAGLMFPEDEMLGVDIVIPDIQYVIENKERLKGIFLTHGHEHAIGAVSYVLEQIDAPVYGSKLTIALVKEAMKARNIKKKVRYYTVNHDSIMRFKNVNVSFFNTTHSIPDSLGVCIHTSYGSIVYTGEFKFDQSLHGHYAPDLKRMAEIGDEGVFALISDSTEAEKPGYNTPENIIEHHMYDAFAKVKGRLIVSCYASNFVRIQQVLNIASQLNRKVSFLGRSLESSFNIARKMGYFDIPKDLLIPINEVENYPKNEVIIIATGMQGEPVEALSQMARKKHKIMNIEEGDSIFLAITASANMEVIIADTLNELVRAGAHIIPNNKKIHASSHGCMEELKMMLNIMKPEYFVPVQGEFKMQIAHAKLAAETGVAPEKIFLVEKGDVISYNGKDMILNEKVQSGNILIDGIGVGDVGNIVLRDRHLLAEDGIFIAVVTLDPKNRRIAAGPEIQSRGFVYVRESEELLKEAEEKVRKIVEEGLQEKRIEWSEIKQNMRDQISKLLFESTKRRPMIIPVISEI</sequence>
<reference key="1">
    <citation type="journal article" date="2003" name="Mol. Microbiol.">
        <title>Genome-based analysis of virulence genes in a non-biofilm-forming Staphylococcus epidermidis strain (ATCC 12228).</title>
        <authorList>
            <person name="Zhang Y.-Q."/>
            <person name="Ren S.-X."/>
            <person name="Li H.-L."/>
            <person name="Wang Y.-X."/>
            <person name="Fu G."/>
            <person name="Yang J."/>
            <person name="Qin Z.-Q."/>
            <person name="Miao Y.-G."/>
            <person name="Wang W.-Y."/>
            <person name="Chen R.-S."/>
            <person name="Shen Y."/>
            <person name="Chen Z."/>
            <person name="Yuan Z.-H."/>
            <person name="Zhao G.-P."/>
            <person name="Qu D."/>
            <person name="Danchin A."/>
            <person name="Wen Y.-M."/>
        </authorList>
    </citation>
    <scope>NUCLEOTIDE SEQUENCE [LARGE SCALE GENOMIC DNA]</scope>
    <source>
        <strain>ATCC 12228 / FDA PCI 1200</strain>
    </source>
</reference>
<dbReference type="EC" id="3.1.-.-" evidence="2"/>
<dbReference type="EMBL" id="AE015929">
    <property type="protein sequence ID" value="AAO04549.1"/>
    <property type="status" value="ALT_INIT"/>
    <property type="molecule type" value="Genomic_DNA"/>
</dbReference>
<dbReference type="RefSeq" id="NP_764507.1">
    <property type="nucleotide sequence ID" value="NC_004461.1"/>
</dbReference>
<dbReference type="PDB" id="6K6W">
    <property type="method" value="X-ray"/>
    <property type="resolution" value="2.70 A"/>
    <property type="chains" value="A/B/C/D=1-557"/>
</dbReference>
<dbReference type="PDBsum" id="6K6W"/>
<dbReference type="SMR" id="Q8CST0"/>
<dbReference type="KEGG" id="sep:SE_0952"/>
<dbReference type="PATRIC" id="fig|176280.10.peg.926"/>
<dbReference type="eggNOG" id="COG0595">
    <property type="taxonomic scope" value="Bacteria"/>
</dbReference>
<dbReference type="HOGENOM" id="CLU_008727_3_1_9"/>
<dbReference type="OrthoDB" id="9758375at2"/>
<dbReference type="Proteomes" id="UP000001411">
    <property type="component" value="Chromosome"/>
</dbReference>
<dbReference type="GO" id="GO:0005737">
    <property type="term" value="C:cytoplasm"/>
    <property type="evidence" value="ECO:0007669"/>
    <property type="project" value="UniProtKB-SubCell"/>
</dbReference>
<dbReference type="GO" id="GO:0004534">
    <property type="term" value="F:5'-3' RNA exonuclease activity"/>
    <property type="evidence" value="ECO:0007669"/>
    <property type="project" value="UniProtKB-UniRule"/>
</dbReference>
<dbReference type="GO" id="GO:0003723">
    <property type="term" value="F:RNA binding"/>
    <property type="evidence" value="ECO:0007669"/>
    <property type="project" value="UniProtKB-UniRule"/>
</dbReference>
<dbReference type="GO" id="GO:0004521">
    <property type="term" value="F:RNA endonuclease activity"/>
    <property type="evidence" value="ECO:0007669"/>
    <property type="project" value="UniProtKB-UniRule"/>
</dbReference>
<dbReference type="GO" id="GO:0008270">
    <property type="term" value="F:zinc ion binding"/>
    <property type="evidence" value="ECO:0007669"/>
    <property type="project" value="InterPro"/>
</dbReference>
<dbReference type="GO" id="GO:0006364">
    <property type="term" value="P:rRNA processing"/>
    <property type="evidence" value="ECO:0007669"/>
    <property type="project" value="UniProtKB-UniRule"/>
</dbReference>
<dbReference type="CDD" id="cd07714">
    <property type="entry name" value="RNaseJ_MBL-fold"/>
    <property type="match status" value="1"/>
</dbReference>
<dbReference type="FunFam" id="3.10.20.580:FF:000001">
    <property type="entry name" value="Ribonuclease J"/>
    <property type="match status" value="1"/>
</dbReference>
<dbReference type="FunFam" id="3.40.50.10710:FF:000002">
    <property type="entry name" value="Ribonuclease J 2"/>
    <property type="match status" value="1"/>
</dbReference>
<dbReference type="Gene3D" id="3.10.20.580">
    <property type="match status" value="1"/>
</dbReference>
<dbReference type="Gene3D" id="3.40.50.10710">
    <property type="entry name" value="Metallo-hydrolase/oxidoreductase"/>
    <property type="match status" value="1"/>
</dbReference>
<dbReference type="Gene3D" id="3.60.15.10">
    <property type="entry name" value="Ribonuclease Z/Hydroxyacylglutathione hydrolase-like"/>
    <property type="match status" value="1"/>
</dbReference>
<dbReference type="HAMAP" id="MF_01491">
    <property type="entry name" value="RNase_J_bact"/>
    <property type="match status" value="1"/>
</dbReference>
<dbReference type="InterPro" id="IPR001279">
    <property type="entry name" value="Metallo-B-lactamas"/>
</dbReference>
<dbReference type="InterPro" id="IPR036866">
    <property type="entry name" value="RibonucZ/Hydroxyglut_hydro"/>
</dbReference>
<dbReference type="InterPro" id="IPR011108">
    <property type="entry name" value="RMMBL"/>
</dbReference>
<dbReference type="InterPro" id="IPR004613">
    <property type="entry name" value="RNase_J"/>
</dbReference>
<dbReference type="InterPro" id="IPR042173">
    <property type="entry name" value="RNase_J_2"/>
</dbReference>
<dbReference type="InterPro" id="IPR055132">
    <property type="entry name" value="RNase_J_b_CASP"/>
</dbReference>
<dbReference type="InterPro" id="IPR030854">
    <property type="entry name" value="RNase_J_bac"/>
</dbReference>
<dbReference type="InterPro" id="IPR041636">
    <property type="entry name" value="RNase_J_C"/>
</dbReference>
<dbReference type="NCBIfam" id="TIGR00649">
    <property type="entry name" value="MG423"/>
    <property type="match status" value="1"/>
</dbReference>
<dbReference type="PANTHER" id="PTHR43694">
    <property type="entry name" value="RIBONUCLEASE J"/>
    <property type="match status" value="1"/>
</dbReference>
<dbReference type="PANTHER" id="PTHR43694:SF4">
    <property type="entry name" value="RIBONUCLEASE J 2"/>
    <property type="match status" value="1"/>
</dbReference>
<dbReference type="Pfam" id="PF00753">
    <property type="entry name" value="Lactamase_B"/>
    <property type="match status" value="1"/>
</dbReference>
<dbReference type="Pfam" id="PF07521">
    <property type="entry name" value="RMMBL"/>
    <property type="match status" value="1"/>
</dbReference>
<dbReference type="Pfam" id="PF22505">
    <property type="entry name" value="RNase_J_b_CASP"/>
    <property type="match status" value="1"/>
</dbReference>
<dbReference type="Pfam" id="PF17770">
    <property type="entry name" value="RNase_J_C"/>
    <property type="match status" value="1"/>
</dbReference>
<dbReference type="PIRSF" id="PIRSF004803">
    <property type="entry name" value="RnjA"/>
    <property type="match status" value="1"/>
</dbReference>
<dbReference type="SMART" id="SM00849">
    <property type="entry name" value="Lactamase_B"/>
    <property type="match status" value="1"/>
</dbReference>
<dbReference type="SUPFAM" id="SSF56281">
    <property type="entry name" value="Metallo-hydrolase/oxidoreductase"/>
    <property type="match status" value="1"/>
</dbReference>
<feature type="chain" id="PRO_0000286855" description="Ribonuclease J 2">
    <location>
        <begin position="1"/>
        <end position="557"/>
    </location>
</feature>
<feature type="binding site" evidence="2">
    <location>
        <position position="76"/>
    </location>
    <ligand>
        <name>Zn(2+)</name>
        <dbReference type="ChEBI" id="CHEBI:29105"/>
        <note>catalytic</note>
    </ligand>
</feature>
<feature type="binding site" evidence="2">
    <location>
        <position position="78"/>
    </location>
    <ligand>
        <name>Zn(2+)</name>
        <dbReference type="ChEBI" id="CHEBI:29105"/>
        <note>catalytic</note>
    </ligand>
</feature>
<feature type="binding site" evidence="2">
    <location>
        <position position="144"/>
    </location>
    <ligand>
        <name>Zn(2+)</name>
        <dbReference type="ChEBI" id="CHEBI:29105"/>
        <note>catalytic</note>
    </ligand>
</feature>
<feature type="binding site" evidence="2">
    <location>
        <position position="166"/>
    </location>
    <ligand>
        <name>Zn(2+)</name>
        <dbReference type="ChEBI" id="CHEBI:29105"/>
        <note>catalytic</note>
    </ligand>
</feature>
<feature type="binding site" evidence="2">
    <location>
        <begin position="366"/>
        <end position="370"/>
    </location>
    <ligand>
        <name>substrate</name>
    </ligand>
</feature>
<feature type="strand" evidence="4">
    <location>
        <begin position="11"/>
        <end position="22"/>
    </location>
</feature>
<feature type="strand" evidence="4">
    <location>
        <begin position="26"/>
        <end position="31"/>
    </location>
</feature>
<feature type="strand" evidence="4">
    <location>
        <begin position="34"/>
        <end position="38"/>
    </location>
</feature>
<feature type="strand" evidence="4">
    <location>
        <begin position="47"/>
        <end position="50"/>
    </location>
</feature>
<feature type="strand" evidence="4">
    <location>
        <begin position="54"/>
        <end position="57"/>
    </location>
</feature>
<feature type="helix" evidence="4">
    <location>
        <begin position="60"/>
        <end position="64"/>
    </location>
</feature>
<feature type="helix" evidence="4">
    <location>
        <begin position="65"/>
        <end position="68"/>
    </location>
</feature>
<feature type="strand" evidence="4">
    <location>
        <begin position="69"/>
        <end position="74"/>
    </location>
</feature>
<feature type="helix" evidence="4">
    <location>
        <begin position="79"/>
        <end position="82"/>
    </location>
</feature>
<feature type="helix" evidence="4">
    <location>
        <begin position="85"/>
        <end position="91"/>
    </location>
</feature>
<feature type="strand" evidence="4">
    <location>
        <begin position="96"/>
        <end position="98"/>
    </location>
</feature>
<feature type="helix" evidence="4">
    <location>
        <begin position="100"/>
        <end position="112"/>
    </location>
</feature>
<feature type="strand" evidence="4">
    <location>
        <begin position="121"/>
        <end position="123"/>
    </location>
</feature>
<feature type="strand" evidence="4">
    <location>
        <begin position="129"/>
        <end position="131"/>
    </location>
</feature>
<feature type="strand" evidence="4">
    <location>
        <begin position="136"/>
        <end position="143"/>
    </location>
</feature>
<feature type="strand" evidence="4">
    <location>
        <begin position="145"/>
        <end position="156"/>
    </location>
</feature>
<feature type="strand" evidence="4">
    <location>
        <begin position="159"/>
        <end position="163"/>
    </location>
</feature>
<feature type="helix" evidence="4">
    <location>
        <begin position="181"/>
        <end position="190"/>
    </location>
</feature>
<feature type="strand" evidence="4">
    <location>
        <begin position="192"/>
        <end position="198"/>
    </location>
</feature>
<feature type="turn" evidence="4">
    <location>
        <begin position="200"/>
        <end position="203"/>
    </location>
</feature>
<feature type="helix" evidence="4">
    <location>
        <begin position="211"/>
        <end position="222"/>
    </location>
</feature>
<feature type="strand" evidence="4">
    <location>
        <begin position="229"/>
        <end position="234"/>
    </location>
</feature>
<feature type="helix" evidence="4">
    <location>
        <begin position="238"/>
        <end position="250"/>
    </location>
</feature>
<feature type="strand" evidence="4">
    <location>
        <begin position="254"/>
        <end position="261"/>
    </location>
</feature>
<feature type="helix" evidence="4">
    <location>
        <begin position="264"/>
        <end position="271"/>
    </location>
</feature>
<feature type="helix" evidence="4">
    <location>
        <begin position="285"/>
        <end position="290"/>
    </location>
</feature>
<feature type="helix" evidence="4">
    <location>
        <begin position="293"/>
        <end position="295"/>
    </location>
</feature>
<feature type="strand" evidence="4">
    <location>
        <begin position="296"/>
        <end position="305"/>
    </location>
</feature>
<feature type="helix" evidence="4">
    <location>
        <begin position="306"/>
        <end position="315"/>
    </location>
</feature>
<feature type="strand" evidence="4">
    <location>
        <begin position="329"/>
        <end position="334"/>
    </location>
</feature>
<feature type="helix" evidence="4">
    <location>
        <begin position="338"/>
        <end position="340"/>
    </location>
</feature>
<feature type="helix" evidence="4">
    <location>
        <begin position="341"/>
        <end position="353"/>
    </location>
</feature>
<feature type="helix" evidence="4">
    <location>
        <begin position="373"/>
        <end position="383"/>
    </location>
</feature>
<feature type="strand" evidence="4">
    <location>
        <begin position="385"/>
        <end position="393"/>
    </location>
</feature>
<feature type="helix" evidence="4">
    <location>
        <begin position="395"/>
        <end position="408"/>
    </location>
</feature>
<feature type="helix" evidence="4">
    <location>
        <begin position="412"/>
        <end position="414"/>
    </location>
</feature>
<feature type="strand" evidence="4">
    <location>
        <begin position="422"/>
        <end position="426"/>
    </location>
</feature>
<feature type="strand" evidence="4">
    <location>
        <begin position="431"/>
        <end position="436"/>
    </location>
</feature>
<feature type="strand" evidence="4">
    <location>
        <begin position="441"/>
        <end position="444"/>
    </location>
</feature>